<dbReference type="EMBL" id="L49019">
    <property type="protein sequence ID" value="AAB39278.1"/>
    <property type="molecule type" value="Genomic_DNA"/>
</dbReference>
<dbReference type="EMBL" id="AE016828">
    <property type="status" value="NOT_ANNOTATED_CDS"/>
    <property type="molecule type" value="Genomic_DNA"/>
</dbReference>
<dbReference type="PIR" id="S72626">
    <property type="entry name" value="S72626"/>
</dbReference>
<dbReference type="RefSeq" id="WP_010958114.1">
    <property type="nucleotide sequence ID" value="NZ_CDBG01000001.1"/>
</dbReference>
<dbReference type="RefSeq" id="YP_002332993.1">
    <property type="nucleotide sequence ID" value="NC_002971.4"/>
</dbReference>
<dbReference type="STRING" id="227377.CBU_1267a"/>
<dbReference type="GeneID" id="7065864"/>
<dbReference type="KEGG" id="cbu:CBU_1267a"/>
<dbReference type="Proteomes" id="UP000002671">
    <property type="component" value="Chromosome"/>
</dbReference>
<dbReference type="GO" id="GO:0003677">
    <property type="term" value="F:DNA binding"/>
    <property type="evidence" value="ECO:0007669"/>
    <property type="project" value="UniProtKB-KW"/>
</dbReference>
<proteinExistence type="evidence at protein level"/>
<reference key="1">
    <citation type="journal article" date="1996" name="Mol. Microbiol.">
        <title>Developmentally regulated synthesis of an unusually small, basic peptide by Coxiella burnetii.</title>
        <authorList>
            <person name="Heinzen R.A."/>
            <person name="Howe D."/>
            <person name="Mallavia L.P."/>
            <person name="Rockey D.D."/>
            <person name="Hackstadt T."/>
        </authorList>
    </citation>
    <scope>NUCLEOTIDE SEQUENCE [GENOMIC DNA]</scope>
    <scope>PROTEIN SEQUENCE OF 1-25</scope>
    <scope>POSSIBLE ROLE IN DNA-BINDING</scope>
    <source>
        <strain>Nine Mile phase I</strain>
        <strain>Nine Mile phase II</strain>
    </source>
</reference>
<reference key="2">
    <citation type="journal article" date="2003" name="Proc. Natl. Acad. Sci. U.S.A.">
        <title>Complete genome sequence of the Q-fever pathogen, Coxiella burnetii.</title>
        <authorList>
            <person name="Seshadri R."/>
            <person name="Paulsen I.T."/>
            <person name="Eisen J.A."/>
            <person name="Read T.D."/>
            <person name="Nelson K.E."/>
            <person name="Nelson W.C."/>
            <person name="Ward N.L."/>
            <person name="Tettelin H."/>
            <person name="Davidsen T.M."/>
            <person name="Beanan M.J."/>
            <person name="DeBoy R.T."/>
            <person name="Daugherty S.C."/>
            <person name="Brinkac L.M."/>
            <person name="Madupu R."/>
            <person name="Dodson R.J."/>
            <person name="Khouri H.M."/>
            <person name="Lee K.H."/>
            <person name="Carty H.A."/>
            <person name="Scanlan D."/>
            <person name="Heinzen R.A."/>
            <person name="Thompson H.A."/>
            <person name="Samuel J.E."/>
            <person name="Fraser C.M."/>
            <person name="Heidelberg J.F."/>
        </authorList>
    </citation>
    <scope>NUCLEOTIDE SEQUENCE [LARGE SCALE GENOMIC DNA]</scope>
    <source>
        <strain>RSA 493 / Nine Mile phase I</strain>
    </source>
</reference>
<reference key="3">
    <citation type="journal article" date="2001" name="Infect. Immun.">
        <title>Characterization of a stress-induced alternate sigma factor, RpoS, of Coxiella burnetii and its expression during the development cycle.</title>
        <authorList>
            <person name="Seshadri R."/>
            <person name="Samuel J.E."/>
        </authorList>
    </citation>
    <scope>DEVELOPMENTAL STAGE</scope>
    <source>
        <strain>RSA 493 / Nine Mile phase I</strain>
    </source>
</reference>
<feature type="chain" id="PRO_0000318559" description="Protein ScvA">
    <location>
        <begin position="1"/>
        <end position="30"/>
    </location>
</feature>
<feature type="region of interest" description="Disordered" evidence="1">
    <location>
        <begin position="1"/>
        <end position="30"/>
    </location>
</feature>
<name>SCVA_COXBU</name>
<protein>
    <recommendedName>
        <fullName>Protein ScvA</fullName>
    </recommendedName>
    <alternativeName>
        <fullName>Small-cell-variant protein A</fullName>
        <shortName>SCV protein A</shortName>
    </alternativeName>
</protein>
<keyword id="KW-0903">Direct protein sequencing</keyword>
<keyword id="KW-0238">DNA-binding</keyword>
<keyword id="KW-1185">Reference proteome</keyword>
<organism>
    <name type="scientific">Coxiella burnetii (strain RSA 493 / Nine Mile phase I)</name>
    <dbReference type="NCBI Taxonomy" id="227377"/>
    <lineage>
        <taxon>Bacteria</taxon>
        <taxon>Pseudomonadati</taxon>
        <taxon>Pseudomonadota</taxon>
        <taxon>Gammaproteobacteria</taxon>
        <taxon>Legionellales</taxon>
        <taxon>Coxiellaceae</taxon>
        <taxon>Coxiella</taxon>
    </lineage>
</organism>
<sequence length="30" mass="3614">MERQNVQQQRGKDQRPQRPGASNPRRPNQR</sequence>
<evidence type="ECO:0000256" key="1">
    <source>
        <dbReference type="SAM" id="MobiDB-lite"/>
    </source>
</evidence>
<evidence type="ECO:0000269" key="2">
    <source>
    </source>
</evidence>
<evidence type="ECO:0000269" key="3">
    <source>
    </source>
</evidence>
<gene>
    <name type="primary">scvA</name>
    <name type="ordered locus">CBU_1267.1</name>
</gene>
<comment type="function">
    <text>Might be involved in DNA-binding; the protein binds DNA in gel-shift assays and immunogold electron microscopy shows labelling of condensed chromatin.</text>
</comment>
<comment type="developmental stage">
    <text evidence="2 3">Only detected in the small cell variant (SCV) stage (at protein level). LCVs are more metabolically active than SCVs. The protein is present in SCVs from Nine Mile phase I strains, but its distribution in phase II strains was not examined (PubMed:8899704).</text>
</comment>
<comment type="miscellaneous">
    <text>The protein sequence was determined from Nine Mile phase II cells.</text>
</comment>
<accession>Q45966</accession>